<comment type="function">
    <text evidence="1">Catalyzes the anti-1,4-elimination of the C-3 phosphate and the C-6 proR hydrogen from 5-enolpyruvylshikimate-3-phosphate (EPSP) to yield chorismate, which is the branch point compound that serves as the starting substrate for the three terminal pathways of aromatic amino acid biosynthesis. This reaction introduces a second double bond into the aromatic ring system.</text>
</comment>
<comment type="catalytic activity">
    <reaction evidence="1">
        <text>5-O-(1-carboxyvinyl)-3-phosphoshikimate = chorismate + phosphate</text>
        <dbReference type="Rhea" id="RHEA:21020"/>
        <dbReference type="ChEBI" id="CHEBI:29748"/>
        <dbReference type="ChEBI" id="CHEBI:43474"/>
        <dbReference type="ChEBI" id="CHEBI:57701"/>
        <dbReference type="EC" id="4.2.3.5"/>
    </reaction>
</comment>
<comment type="cofactor">
    <cofactor evidence="1">
        <name>FMNH2</name>
        <dbReference type="ChEBI" id="CHEBI:57618"/>
    </cofactor>
    <text evidence="1">Reduced FMN (FMNH(2)).</text>
</comment>
<comment type="pathway">
    <text evidence="1">Metabolic intermediate biosynthesis; chorismate biosynthesis; chorismate from D-erythrose 4-phosphate and phosphoenolpyruvate: step 7/7.</text>
</comment>
<comment type="subunit">
    <text evidence="1">Homotetramer.</text>
</comment>
<comment type="similarity">
    <text evidence="1">Belongs to the chorismate synthase family.</text>
</comment>
<organism>
    <name type="scientific">Nitrosomonas eutropha (strain DSM 101675 / C91 / Nm57)</name>
    <dbReference type="NCBI Taxonomy" id="335283"/>
    <lineage>
        <taxon>Bacteria</taxon>
        <taxon>Pseudomonadati</taxon>
        <taxon>Pseudomonadota</taxon>
        <taxon>Betaproteobacteria</taxon>
        <taxon>Nitrosomonadales</taxon>
        <taxon>Nitrosomonadaceae</taxon>
        <taxon>Nitrosomonas</taxon>
    </lineage>
</organism>
<reference key="1">
    <citation type="journal article" date="2007" name="Environ. Microbiol.">
        <title>Whole-genome analysis of the ammonia-oxidizing bacterium, Nitrosomonas eutropha C91: implications for niche adaptation.</title>
        <authorList>
            <person name="Stein L.Y."/>
            <person name="Arp D.J."/>
            <person name="Berube P.M."/>
            <person name="Chain P.S."/>
            <person name="Hauser L."/>
            <person name="Jetten M.S."/>
            <person name="Klotz M.G."/>
            <person name="Larimer F.W."/>
            <person name="Norton J.M."/>
            <person name="Op den Camp H.J.M."/>
            <person name="Shin M."/>
            <person name="Wei X."/>
        </authorList>
    </citation>
    <scope>NUCLEOTIDE SEQUENCE [LARGE SCALE GENOMIC DNA]</scope>
    <source>
        <strain>DSM 101675 / C91 / Nm57</strain>
    </source>
</reference>
<feature type="chain" id="PRO_1000022517" description="Chorismate synthase">
    <location>
        <begin position="1"/>
        <end position="390"/>
    </location>
</feature>
<feature type="region of interest" description="Disordered" evidence="2">
    <location>
        <begin position="360"/>
        <end position="390"/>
    </location>
</feature>
<feature type="compositionally biased region" description="Polar residues" evidence="2">
    <location>
        <begin position="366"/>
        <end position="376"/>
    </location>
</feature>
<feature type="binding site" evidence="1">
    <location>
        <position position="48"/>
    </location>
    <ligand>
        <name>NADP(+)</name>
        <dbReference type="ChEBI" id="CHEBI:58349"/>
    </ligand>
</feature>
<feature type="binding site" evidence="1">
    <location>
        <position position="54"/>
    </location>
    <ligand>
        <name>NADP(+)</name>
        <dbReference type="ChEBI" id="CHEBI:58349"/>
    </ligand>
</feature>
<feature type="binding site" evidence="1">
    <location>
        <begin position="125"/>
        <end position="127"/>
    </location>
    <ligand>
        <name>FMN</name>
        <dbReference type="ChEBI" id="CHEBI:58210"/>
    </ligand>
</feature>
<feature type="binding site" evidence="1">
    <location>
        <begin position="238"/>
        <end position="239"/>
    </location>
    <ligand>
        <name>FMN</name>
        <dbReference type="ChEBI" id="CHEBI:58210"/>
    </ligand>
</feature>
<feature type="binding site" evidence="1">
    <location>
        <position position="278"/>
    </location>
    <ligand>
        <name>FMN</name>
        <dbReference type="ChEBI" id="CHEBI:58210"/>
    </ligand>
</feature>
<feature type="binding site" evidence="1">
    <location>
        <begin position="293"/>
        <end position="297"/>
    </location>
    <ligand>
        <name>FMN</name>
        <dbReference type="ChEBI" id="CHEBI:58210"/>
    </ligand>
</feature>
<feature type="binding site" evidence="1">
    <location>
        <position position="319"/>
    </location>
    <ligand>
        <name>FMN</name>
        <dbReference type="ChEBI" id="CHEBI:58210"/>
    </ligand>
</feature>
<dbReference type="EC" id="4.2.3.5" evidence="1"/>
<dbReference type="EMBL" id="CP000450">
    <property type="protein sequence ID" value="ABI60187.1"/>
    <property type="molecule type" value="Genomic_DNA"/>
</dbReference>
<dbReference type="RefSeq" id="WP_011634988.1">
    <property type="nucleotide sequence ID" value="NC_008344.1"/>
</dbReference>
<dbReference type="SMR" id="Q0AEP5"/>
<dbReference type="STRING" id="335283.Neut_1957"/>
<dbReference type="KEGG" id="net:Neut_1957"/>
<dbReference type="eggNOG" id="COG0082">
    <property type="taxonomic scope" value="Bacteria"/>
</dbReference>
<dbReference type="HOGENOM" id="CLU_034547_0_2_4"/>
<dbReference type="OrthoDB" id="9771806at2"/>
<dbReference type="UniPathway" id="UPA00053">
    <property type="reaction ID" value="UER00090"/>
</dbReference>
<dbReference type="Proteomes" id="UP000001966">
    <property type="component" value="Chromosome"/>
</dbReference>
<dbReference type="GO" id="GO:0005829">
    <property type="term" value="C:cytosol"/>
    <property type="evidence" value="ECO:0007669"/>
    <property type="project" value="TreeGrafter"/>
</dbReference>
<dbReference type="GO" id="GO:0004107">
    <property type="term" value="F:chorismate synthase activity"/>
    <property type="evidence" value="ECO:0007669"/>
    <property type="project" value="UniProtKB-UniRule"/>
</dbReference>
<dbReference type="GO" id="GO:0010181">
    <property type="term" value="F:FMN binding"/>
    <property type="evidence" value="ECO:0007669"/>
    <property type="project" value="TreeGrafter"/>
</dbReference>
<dbReference type="GO" id="GO:0008652">
    <property type="term" value="P:amino acid biosynthetic process"/>
    <property type="evidence" value="ECO:0007669"/>
    <property type="project" value="UniProtKB-KW"/>
</dbReference>
<dbReference type="GO" id="GO:0009073">
    <property type="term" value="P:aromatic amino acid family biosynthetic process"/>
    <property type="evidence" value="ECO:0007669"/>
    <property type="project" value="UniProtKB-KW"/>
</dbReference>
<dbReference type="GO" id="GO:0009423">
    <property type="term" value="P:chorismate biosynthetic process"/>
    <property type="evidence" value="ECO:0007669"/>
    <property type="project" value="UniProtKB-UniRule"/>
</dbReference>
<dbReference type="CDD" id="cd07304">
    <property type="entry name" value="Chorismate_synthase"/>
    <property type="match status" value="1"/>
</dbReference>
<dbReference type="FunFam" id="3.60.150.10:FF:000001">
    <property type="entry name" value="Chorismate synthase"/>
    <property type="match status" value="1"/>
</dbReference>
<dbReference type="Gene3D" id="3.60.150.10">
    <property type="entry name" value="Chorismate synthase AroC"/>
    <property type="match status" value="1"/>
</dbReference>
<dbReference type="HAMAP" id="MF_00300">
    <property type="entry name" value="Chorismate_synth"/>
    <property type="match status" value="1"/>
</dbReference>
<dbReference type="InterPro" id="IPR000453">
    <property type="entry name" value="Chorismate_synth"/>
</dbReference>
<dbReference type="InterPro" id="IPR035904">
    <property type="entry name" value="Chorismate_synth_AroC_sf"/>
</dbReference>
<dbReference type="InterPro" id="IPR020541">
    <property type="entry name" value="Chorismate_synthase_CS"/>
</dbReference>
<dbReference type="NCBIfam" id="TIGR00033">
    <property type="entry name" value="aroC"/>
    <property type="match status" value="1"/>
</dbReference>
<dbReference type="NCBIfam" id="NF003793">
    <property type="entry name" value="PRK05382.1"/>
    <property type="match status" value="1"/>
</dbReference>
<dbReference type="PANTHER" id="PTHR21085">
    <property type="entry name" value="CHORISMATE SYNTHASE"/>
    <property type="match status" value="1"/>
</dbReference>
<dbReference type="PANTHER" id="PTHR21085:SF0">
    <property type="entry name" value="CHORISMATE SYNTHASE"/>
    <property type="match status" value="1"/>
</dbReference>
<dbReference type="Pfam" id="PF01264">
    <property type="entry name" value="Chorismate_synt"/>
    <property type="match status" value="1"/>
</dbReference>
<dbReference type="PIRSF" id="PIRSF001456">
    <property type="entry name" value="Chorismate_synth"/>
    <property type="match status" value="1"/>
</dbReference>
<dbReference type="SUPFAM" id="SSF103263">
    <property type="entry name" value="Chorismate synthase, AroC"/>
    <property type="match status" value="1"/>
</dbReference>
<dbReference type="PROSITE" id="PS00787">
    <property type="entry name" value="CHORISMATE_SYNTHASE_1"/>
    <property type="match status" value="1"/>
</dbReference>
<dbReference type="PROSITE" id="PS00788">
    <property type="entry name" value="CHORISMATE_SYNTHASE_2"/>
    <property type="match status" value="1"/>
</dbReference>
<dbReference type="PROSITE" id="PS00789">
    <property type="entry name" value="CHORISMATE_SYNTHASE_3"/>
    <property type="match status" value="1"/>
</dbReference>
<gene>
    <name evidence="1" type="primary">aroC</name>
    <name type="ordered locus">Neut_1957</name>
</gene>
<proteinExistence type="inferred from homology"/>
<evidence type="ECO:0000255" key="1">
    <source>
        <dbReference type="HAMAP-Rule" id="MF_00300"/>
    </source>
</evidence>
<evidence type="ECO:0000256" key="2">
    <source>
        <dbReference type="SAM" id="MobiDB-lite"/>
    </source>
</evidence>
<keyword id="KW-0028">Amino-acid biosynthesis</keyword>
<keyword id="KW-0057">Aromatic amino acid biosynthesis</keyword>
<keyword id="KW-0274">FAD</keyword>
<keyword id="KW-0285">Flavoprotein</keyword>
<keyword id="KW-0288">FMN</keyword>
<keyword id="KW-0456">Lyase</keyword>
<keyword id="KW-0521">NADP</keyword>
<sequence length="390" mass="42267">MSGNTIGKLFCVTSFGESHGPAIGCIVDGCPPGLVLSAMDIQLELDRRKPGTSRHVTQRHEGDRVEILSGVFDNITTGTPIALLIRNEDQRSKDYSKIMDVFRPGHADYTYWQKYGIRDYRGGGRSSARETAVRVAAGAIAKKWLHERYGIVIRGYMAQLGPIAIPFKNWEVINQNPFFVADDDYVPKLEAFMDALRKSGDSAGARINVIAEGVPVGWGEPVYDRLDADIAYAMMSINAAKGVEIGAGFNSVTQKGTEHSDEITPEGFLSNNAGGILGGISSSQPITVSVAIKPTSSIRLGRRSIDKAGNPVIVETHGRHDPCVGIRATPIVEAMLAIVLMDHALRHRGQNEDVVCTTPKVPGNIINPTNPVTTQPDVRRAEDPEPDENS</sequence>
<protein>
    <recommendedName>
        <fullName evidence="1">Chorismate synthase</fullName>
        <shortName evidence="1">CS</shortName>
        <ecNumber evidence="1">4.2.3.5</ecNumber>
    </recommendedName>
    <alternativeName>
        <fullName evidence="1">5-enolpyruvylshikimate-3-phosphate phospholyase</fullName>
    </alternativeName>
</protein>
<accession>Q0AEP5</accession>
<name>AROC_NITEC</name>